<evidence type="ECO:0000250" key="1"/>
<evidence type="ECO:0000255" key="2"/>
<evidence type="ECO:0000305" key="3"/>
<gene>
    <name type="primary">ctaE</name>
    <name type="ordered locus">DIP1627</name>
</gene>
<name>COX3_CORDI</name>
<protein>
    <recommendedName>
        <fullName>Cytochrome c oxidase subunit 3</fullName>
        <ecNumber>7.1.1.9</ecNumber>
    </recommendedName>
    <alternativeName>
        <fullName>Cytochrome aa3 subunit 3</fullName>
    </alternativeName>
    <alternativeName>
        <fullName>Cytochrome c oxidase polypeptide III</fullName>
    </alternativeName>
</protein>
<dbReference type="EC" id="7.1.1.9"/>
<dbReference type="EMBL" id="BX248358">
    <property type="protein sequence ID" value="CAE50152.1"/>
    <property type="molecule type" value="Genomic_DNA"/>
</dbReference>
<dbReference type="SMR" id="Q6NGA0"/>
<dbReference type="STRING" id="257309.DIP1627"/>
<dbReference type="KEGG" id="cdi:DIP1627"/>
<dbReference type="HOGENOM" id="CLU_044071_1_1_11"/>
<dbReference type="Proteomes" id="UP000002198">
    <property type="component" value="Chromosome"/>
</dbReference>
<dbReference type="GO" id="GO:0005886">
    <property type="term" value="C:plasma membrane"/>
    <property type="evidence" value="ECO:0007669"/>
    <property type="project" value="UniProtKB-SubCell"/>
</dbReference>
<dbReference type="GO" id="GO:0004129">
    <property type="term" value="F:cytochrome-c oxidase activity"/>
    <property type="evidence" value="ECO:0007669"/>
    <property type="project" value="UniProtKB-EC"/>
</dbReference>
<dbReference type="GO" id="GO:0019646">
    <property type="term" value="P:aerobic electron transport chain"/>
    <property type="evidence" value="ECO:0007669"/>
    <property type="project" value="InterPro"/>
</dbReference>
<dbReference type="CDD" id="cd00386">
    <property type="entry name" value="Heme_Cu_Oxidase_III_like"/>
    <property type="match status" value="1"/>
</dbReference>
<dbReference type="FunFam" id="1.20.120.80:FF:000001">
    <property type="entry name" value="Cytochrome (Ubi)quinol oxidase subunit III"/>
    <property type="match status" value="1"/>
</dbReference>
<dbReference type="Gene3D" id="1.20.120.80">
    <property type="entry name" value="Cytochrome c oxidase, subunit III, four-helix bundle"/>
    <property type="match status" value="1"/>
</dbReference>
<dbReference type="InterPro" id="IPR024791">
    <property type="entry name" value="Cyt_c/ubiquinol_Oxase_su3"/>
</dbReference>
<dbReference type="InterPro" id="IPR000298">
    <property type="entry name" value="Cyt_c_oxidase-like_su3"/>
</dbReference>
<dbReference type="InterPro" id="IPR035973">
    <property type="entry name" value="Cyt_c_oxidase_su3-like_sf"/>
</dbReference>
<dbReference type="InterPro" id="IPR013833">
    <property type="entry name" value="Cyt_c_oxidase_su3_a-hlx"/>
</dbReference>
<dbReference type="PANTHER" id="PTHR11403:SF2">
    <property type="entry name" value="CYTOCHROME BO(3) UBIQUINOL OXIDASE SUBUNIT 3"/>
    <property type="match status" value="1"/>
</dbReference>
<dbReference type="PANTHER" id="PTHR11403">
    <property type="entry name" value="CYTOCHROME C OXIDASE SUBUNIT III"/>
    <property type="match status" value="1"/>
</dbReference>
<dbReference type="Pfam" id="PF00510">
    <property type="entry name" value="COX3"/>
    <property type="match status" value="1"/>
</dbReference>
<dbReference type="SUPFAM" id="SSF81452">
    <property type="entry name" value="Cytochrome c oxidase subunit III-like"/>
    <property type="match status" value="1"/>
</dbReference>
<dbReference type="PROSITE" id="PS50253">
    <property type="entry name" value="COX3"/>
    <property type="match status" value="1"/>
</dbReference>
<keyword id="KW-1003">Cell membrane</keyword>
<keyword id="KW-0472">Membrane</keyword>
<keyword id="KW-1185">Reference proteome</keyword>
<keyword id="KW-1278">Translocase</keyword>
<keyword id="KW-0812">Transmembrane</keyword>
<keyword id="KW-1133">Transmembrane helix</keyword>
<proteinExistence type="inferred from homology"/>
<organism>
    <name type="scientific">Corynebacterium diphtheriae (strain ATCC 700971 / NCTC 13129 / Biotype gravis)</name>
    <dbReference type="NCBI Taxonomy" id="257309"/>
    <lineage>
        <taxon>Bacteria</taxon>
        <taxon>Bacillati</taxon>
        <taxon>Actinomycetota</taxon>
        <taxon>Actinomycetes</taxon>
        <taxon>Mycobacteriales</taxon>
        <taxon>Corynebacteriaceae</taxon>
        <taxon>Corynebacterium</taxon>
    </lineage>
</organism>
<accession>Q6NGA0</accession>
<comment type="catalytic activity">
    <reaction>
        <text>4 Fe(II)-[cytochrome c] + O2 + 8 H(+)(in) = 4 Fe(III)-[cytochrome c] + 2 H2O + 4 H(+)(out)</text>
        <dbReference type="Rhea" id="RHEA:11436"/>
        <dbReference type="Rhea" id="RHEA-COMP:10350"/>
        <dbReference type="Rhea" id="RHEA-COMP:14399"/>
        <dbReference type="ChEBI" id="CHEBI:15377"/>
        <dbReference type="ChEBI" id="CHEBI:15378"/>
        <dbReference type="ChEBI" id="CHEBI:15379"/>
        <dbReference type="ChEBI" id="CHEBI:29033"/>
        <dbReference type="ChEBI" id="CHEBI:29034"/>
        <dbReference type="EC" id="7.1.1.9"/>
    </reaction>
</comment>
<comment type="subunit">
    <text evidence="1">Associates with subunits I, II and IV to form cytochrome c oxidase.</text>
</comment>
<comment type="subcellular location">
    <subcellularLocation>
        <location evidence="1">Cell membrane</location>
        <topology evidence="1">Multi-pass membrane protein</topology>
    </subcellularLocation>
</comment>
<comment type="similarity">
    <text evidence="3">Belongs to the cytochrome c oxidase subunit 3 family.</text>
</comment>
<sequence>MTSAIGNKDMAAPQRVAALNRPNMVSVGTIVFLSQELMFFAGLFAMYFTSRANGIGNGSWKEGAHHLNVPYALVITIILISSSVTAQFGVFAAERGDVFGVRRWFSLTILLGAIFLVGQAYEYFHLVEHGMTIQSSVYGSSFFITTGFHAAHVLAGALAFVVVLLRLSKSKFTPAQATAAMVVSYYWHFVDVVWIGLFITIYFIQ</sequence>
<feature type="chain" id="PRO_0000183878" description="Cytochrome c oxidase subunit 3">
    <location>
        <begin position="1"/>
        <end position="205"/>
    </location>
</feature>
<feature type="transmembrane region" description="Helical" evidence="2">
    <location>
        <begin position="28"/>
        <end position="48"/>
    </location>
</feature>
<feature type="transmembrane region" description="Helical" evidence="2">
    <location>
        <begin position="72"/>
        <end position="92"/>
    </location>
</feature>
<feature type="transmembrane region" description="Helical" evidence="2">
    <location>
        <begin position="104"/>
        <end position="124"/>
    </location>
</feature>
<feature type="transmembrane region" description="Helical" evidence="2">
    <location>
        <begin position="142"/>
        <end position="162"/>
    </location>
</feature>
<feature type="transmembrane region" description="Helical" evidence="2">
    <location>
        <begin position="184"/>
        <end position="204"/>
    </location>
</feature>
<reference key="1">
    <citation type="journal article" date="2003" name="Nucleic Acids Res.">
        <title>The complete genome sequence and analysis of Corynebacterium diphtheriae NCTC13129.</title>
        <authorList>
            <person name="Cerdeno-Tarraga A.-M."/>
            <person name="Efstratiou A."/>
            <person name="Dover L.G."/>
            <person name="Holden M.T.G."/>
            <person name="Pallen M.J."/>
            <person name="Bentley S.D."/>
            <person name="Besra G.S."/>
            <person name="Churcher C.M."/>
            <person name="James K.D."/>
            <person name="De Zoysa A."/>
            <person name="Chillingworth T."/>
            <person name="Cronin A."/>
            <person name="Dowd L."/>
            <person name="Feltwell T."/>
            <person name="Hamlin N."/>
            <person name="Holroyd S."/>
            <person name="Jagels K."/>
            <person name="Moule S."/>
            <person name="Quail M.A."/>
            <person name="Rabbinowitsch E."/>
            <person name="Rutherford K.M."/>
            <person name="Thomson N.R."/>
            <person name="Unwin L."/>
            <person name="Whitehead S."/>
            <person name="Barrell B.G."/>
            <person name="Parkhill J."/>
        </authorList>
    </citation>
    <scope>NUCLEOTIDE SEQUENCE [LARGE SCALE GENOMIC DNA]</scope>
    <source>
        <strain>ATCC 700971 / NCTC 13129 / Biotype gravis</strain>
    </source>
</reference>